<reference key="1">
    <citation type="journal article" date="2003" name="J. Neurochem.">
        <title>Novel excitatory Conus peptides define a new conotoxin superfamily.</title>
        <authorList>
            <person name="Jimenez E.C."/>
            <person name="Shetty R.P."/>
            <person name="Lirazan M."/>
            <person name="Rivier J."/>
            <person name="Walker C."/>
            <person name="Abogadie F.C."/>
            <person name="Yoshikami D."/>
            <person name="Cruz L.J."/>
            <person name="Olivera B.M."/>
        </authorList>
    </citation>
    <scope>NUCLEOTIDE SEQUENCE [MRNA]</scope>
    <source>
        <tissue>Venom duct</tissue>
    </source>
</reference>
<name>I1BW_CONRA</name>
<sequence>GHVPCGKDRRKCGYHADCCNCCLSGICKPSTSWTGCSTSTFLLTR</sequence>
<accession>Q7Z0A4</accession>
<evidence type="ECO:0000250" key="1"/>
<evidence type="ECO:0000250" key="2">
    <source>
        <dbReference type="UniProtKB" id="Q7Z094"/>
    </source>
</evidence>
<evidence type="ECO:0000305" key="3"/>
<dbReference type="EMBL" id="AY208949">
    <property type="protein sequence ID" value="AAP41531.1"/>
    <property type="molecule type" value="mRNA"/>
</dbReference>
<dbReference type="SMR" id="Q7Z0A4"/>
<dbReference type="ConoServer" id="830">
    <property type="toxin name" value="R11.12"/>
</dbReference>
<dbReference type="GO" id="GO:0005576">
    <property type="term" value="C:extracellular region"/>
    <property type="evidence" value="ECO:0007669"/>
    <property type="project" value="UniProtKB-SubCell"/>
</dbReference>
<dbReference type="GO" id="GO:0017080">
    <property type="term" value="F:sodium channel regulator activity"/>
    <property type="evidence" value="ECO:0007669"/>
    <property type="project" value="UniProtKB-KW"/>
</dbReference>
<dbReference type="GO" id="GO:0090729">
    <property type="term" value="F:toxin activity"/>
    <property type="evidence" value="ECO:0007669"/>
    <property type="project" value="UniProtKB-KW"/>
</dbReference>
<dbReference type="Gene3D" id="4.10.40.80">
    <property type="match status" value="1"/>
</dbReference>
<dbReference type="InterPro" id="IPR013141">
    <property type="entry name" value="Conotoxin-I_CS"/>
</dbReference>
<dbReference type="InterPro" id="IPR012624">
    <property type="entry name" value="Toxin_19"/>
</dbReference>
<dbReference type="Pfam" id="PF08088">
    <property type="entry name" value="Toxin_19"/>
    <property type="match status" value="1"/>
</dbReference>
<dbReference type="PROSITE" id="PS60019">
    <property type="entry name" value="I_CONOTOXIN"/>
    <property type="match status" value="1"/>
</dbReference>
<feature type="chain" id="PRO_0000035108" description="Iota-conotoxin-like R11.12">
    <location>
        <begin position="1" status="less than"/>
        <end position="44"/>
    </location>
</feature>
<feature type="propeptide" id="PRO_0000035109" description="Removed by a carboxypeptidase" evidence="1">
    <location>
        <position position="45"/>
    </location>
</feature>
<feature type="modified residue" description="D-leucine" evidence="1">
    <location>
        <position position="43"/>
    </location>
</feature>
<feature type="disulfide bond" evidence="2">
    <location>
        <begin position="5"/>
        <end position="19"/>
    </location>
</feature>
<feature type="disulfide bond" evidence="2">
    <location>
        <begin position="12"/>
        <end position="22"/>
    </location>
</feature>
<feature type="disulfide bond" evidence="2">
    <location>
        <begin position="18"/>
        <end position="27"/>
    </location>
</feature>
<feature type="disulfide bond" evidence="2">
    <location>
        <begin position="21"/>
        <end position="36"/>
    </location>
</feature>
<feature type="non-terminal residue">
    <location>
        <position position="1"/>
    </location>
</feature>
<keyword id="KW-0208">D-amino acid</keyword>
<keyword id="KW-1015">Disulfide bond</keyword>
<keyword id="KW-0872">Ion channel impairing toxin</keyword>
<keyword id="KW-0528">Neurotoxin</keyword>
<keyword id="KW-0964">Secreted</keyword>
<keyword id="KW-0800">Toxin</keyword>
<keyword id="KW-0738">Voltage-gated sodium channel impairing toxin</keyword>
<proteinExistence type="evidence at transcript level"/>
<organism>
    <name type="scientific">Conus radiatus</name>
    <name type="common">Rayed cone</name>
    <dbReference type="NCBI Taxonomy" id="61198"/>
    <lineage>
        <taxon>Eukaryota</taxon>
        <taxon>Metazoa</taxon>
        <taxon>Spiralia</taxon>
        <taxon>Lophotrochozoa</taxon>
        <taxon>Mollusca</taxon>
        <taxon>Gastropoda</taxon>
        <taxon>Caenogastropoda</taxon>
        <taxon>Neogastropoda</taxon>
        <taxon>Conoidea</taxon>
        <taxon>Conidae</taxon>
        <taxon>Conus</taxon>
        <taxon>Phasmoconus</taxon>
    </lineage>
</organism>
<protein>
    <recommendedName>
        <fullName>Iota-conotoxin-like R11.12</fullName>
    </recommendedName>
</protein>
<comment type="function">
    <text evidence="1">Iota-conotoxins bind to voltage-gated sodium channels (Nav) and act as agonists by shifting the voltage-dependence of activation to more hyperpolarized levels. Produces general excitatory symptoms (By similarity).</text>
</comment>
<comment type="subcellular location">
    <subcellularLocation>
        <location evidence="1">Secreted</location>
    </subcellularLocation>
</comment>
<comment type="tissue specificity">
    <text>Expressed by the venom duct.</text>
</comment>
<comment type="domain">
    <text>The cysteine framework is XI (C-C-CC-CC-C-C).</text>
</comment>
<comment type="similarity">
    <text evidence="3">Belongs to the conotoxin I1 superfamily.</text>
</comment>